<keyword id="KW-0240">DNA-directed RNA polymerase</keyword>
<keyword id="KW-0548">Nucleotidyltransferase</keyword>
<keyword id="KW-1185">Reference proteome</keyword>
<keyword id="KW-0804">Transcription</keyword>
<keyword id="KW-0808">Transferase</keyword>
<reference key="1">
    <citation type="journal article" date="2008" name="Proc. Natl. Acad. Sci. U.S.A.">
        <title>The genome of Clostridium kluyveri, a strict anaerobe with unique metabolic features.</title>
        <authorList>
            <person name="Seedorf H."/>
            <person name="Fricke W.F."/>
            <person name="Veith B."/>
            <person name="Brueggemann H."/>
            <person name="Liesegang H."/>
            <person name="Strittmatter A."/>
            <person name="Miethke M."/>
            <person name="Buckel W."/>
            <person name="Hinderberger J."/>
            <person name="Li F."/>
            <person name="Hagemeier C."/>
            <person name="Thauer R.K."/>
            <person name="Gottschalk G."/>
        </authorList>
    </citation>
    <scope>NUCLEOTIDE SEQUENCE [LARGE SCALE GENOMIC DNA]</scope>
    <source>
        <strain>ATCC 8527 / DSM 555 / NBRC 12016 / NCIMB 10680 / K1</strain>
    </source>
</reference>
<accession>A5N7X7</accession>
<sequence>MNNSMINPSIVDLLKKVENRYTLVTMTAKRARQLIEGSEALVDIDSTKPVTIAIKEISDRAITYETVKEGIK</sequence>
<gene>
    <name evidence="1" type="primary">rpoZ</name>
    <name type="ordered locus">CKL_1366</name>
</gene>
<protein>
    <recommendedName>
        <fullName evidence="1">DNA-directed RNA polymerase subunit omega</fullName>
        <shortName evidence="1">RNAP omega subunit</shortName>
        <ecNumber evidence="1">2.7.7.6</ecNumber>
    </recommendedName>
    <alternativeName>
        <fullName evidence="1">RNA polymerase omega subunit</fullName>
    </alternativeName>
    <alternativeName>
        <fullName evidence="1">Transcriptase subunit omega</fullName>
    </alternativeName>
</protein>
<name>RPOZ_CLOK5</name>
<proteinExistence type="inferred from homology"/>
<comment type="function">
    <text evidence="1">Promotes RNA polymerase assembly. Latches the N- and C-terminal regions of the beta' subunit thereby facilitating its interaction with the beta and alpha subunits.</text>
</comment>
<comment type="catalytic activity">
    <reaction evidence="1">
        <text>RNA(n) + a ribonucleoside 5'-triphosphate = RNA(n+1) + diphosphate</text>
        <dbReference type="Rhea" id="RHEA:21248"/>
        <dbReference type="Rhea" id="RHEA-COMP:14527"/>
        <dbReference type="Rhea" id="RHEA-COMP:17342"/>
        <dbReference type="ChEBI" id="CHEBI:33019"/>
        <dbReference type="ChEBI" id="CHEBI:61557"/>
        <dbReference type="ChEBI" id="CHEBI:140395"/>
        <dbReference type="EC" id="2.7.7.6"/>
    </reaction>
</comment>
<comment type="subunit">
    <text evidence="1">The RNAP catalytic core consists of 2 alpha, 1 beta, 1 beta' and 1 omega subunit. When a sigma factor is associated with the core the holoenzyme is formed, which can initiate transcription.</text>
</comment>
<comment type="similarity">
    <text evidence="1">Belongs to the RNA polymerase subunit omega family.</text>
</comment>
<evidence type="ECO:0000255" key="1">
    <source>
        <dbReference type="HAMAP-Rule" id="MF_00366"/>
    </source>
</evidence>
<feature type="chain" id="PRO_1000079623" description="DNA-directed RNA polymerase subunit omega">
    <location>
        <begin position="1"/>
        <end position="72"/>
    </location>
</feature>
<organism>
    <name type="scientific">Clostridium kluyveri (strain ATCC 8527 / DSM 555 / NBRC 12016 / NCIMB 10680 / K1)</name>
    <dbReference type="NCBI Taxonomy" id="431943"/>
    <lineage>
        <taxon>Bacteria</taxon>
        <taxon>Bacillati</taxon>
        <taxon>Bacillota</taxon>
        <taxon>Clostridia</taxon>
        <taxon>Eubacteriales</taxon>
        <taxon>Clostridiaceae</taxon>
        <taxon>Clostridium</taxon>
    </lineage>
</organism>
<dbReference type="EC" id="2.7.7.6" evidence="1"/>
<dbReference type="EMBL" id="CP000673">
    <property type="protein sequence ID" value="EDK33408.1"/>
    <property type="molecule type" value="Genomic_DNA"/>
</dbReference>
<dbReference type="RefSeq" id="WP_012101755.1">
    <property type="nucleotide sequence ID" value="NC_009706.1"/>
</dbReference>
<dbReference type="SMR" id="A5N7X7"/>
<dbReference type="STRING" id="431943.CKL_1366"/>
<dbReference type="KEGG" id="ckl:CKL_1366"/>
<dbReference type="eggNOG" id="COG1758">
    <property type="taxonomic scope" value="Bacteria"/>
</dbReference>
<dbReference type="HOGENOM" id="CLU_125406_6_1_9"/>
<dbReference type="Proteomes" id="UP000002411">
    <property type="component" value="Chromosome"/>
</dbReference>
<dbReference type="GO" id="GO:0000428">
    <property type="term" value="C:DNA-directed RNA polymerase complex"/>
    <property type="evidence" value="ECO:0007669"/>
    <property type="project" value="UniProtKB-KW"/>
</dbReference>
<dbReference type="GO" id="GO:0003677">
    <property type="term" value="F:DNA binding"/>
    <property type="evidence" value="ECO:0007669"/>
    <property type="project" value="UniProtKB-UniRule"/>
</dbReference>
<dbReference type="GO" id="GO:0003899">
    <property type="term" value="F:DNA-directed RNA polymerase activity"/>
    <property type="evidence" value="ECO:0007669"/>
    <property type="project" value="UniProtKB-UniRule"/>
</dbReference>
<dbReference type="GO" id="GO:0006351">
    <property type="term" value="P:DNA-templated transcription"/>
    <property type="evidence" value="ECO:0007669"/>
    <property type="project" value="UniProtKB-UniRule"/>
</dbReference>
<dbReference type="Gene3D" id="3.90.940.10">
    <property type="match status" value="1"/>
</dbReference>
<dbReference type="HAMAP" id="MF_00366">
    <property type="entry name" value="RNApol_bact_RpoZ"/>
    <property type="match status" value="1"/>
</dbReference>
<dbReference type="InterPro" id="IPR003716">
    <property type="entry name" value="DNA-dir_RNA_pol_omega"/>
</dbReference>
<dbReference type="InterPro" id="IPR006110">
    <property type="entry name" value="Pol_omega/Rpo6/RPB6"/>
</dbReference>
<dbReference type="InterPro" id="IPR036161">
    <property type="entry name" value="RPB6/omega-like_sf"/>
</dbReference>
<dbReference type="NCBIfam" id="TIGR00690">
    <property type="entry name" value="rpoZ"/>
    <property type="match status" value="1"/>
</dbReference>
<dbReference type="PANTHER" id="PTHR34476">
    <property type="entry name" value="DNA-DIRECTED RNA POLYMERASE SUBUNIT OMEGA"/>
    <property type="match status" value="1"/>
</dbReference>
<dbReference type="PANTHER" id="PTHR34476:SF1">
    <property type="entry name" value="DNA-DIRECTED RNA POLYMERASE SUBUNIT OMEGA"/>
    <property type="match status" value="1"/>
</dbReference>
<dbReference type="Pfam" id="PF01192">
    <property type="entry name" value="RNA_pol_Rpb6"/>
    <property type="match status" value="1"/>
</dbReference>
<dbReference type="SMART" id="SM01409">
    <property type="entry name" value="RNA_pol_Rpb6"/>
    <property type="match status" value="1"/>
</dbReference>
<dbReference type="SUPFAM" id="SSF63562">
    <property type="entry name" value="RPB6/omega subunit-like"/>
    <property type="match status" value="1"/>
</dbReference>